<protein>
    <recommendedName>
        <fullName evidence="1">Tryptophan 2,3-dioxygenase</fullName>
        <shortName evidence="1">TDO</shortName>
        <ecNumber evidence="1">1.13.11.11</ecNumber>
    </recommendedName>
    <alternativeName>
        <fullName evidence="1">Tryptamin 2,3-dioxygenase</fullName>
    </alternativeName>
    <alternativeName>
        <fullName evidence="1">Tryptophan oxygenase</fullName>
        <shortName evidence="1">TO</shortName>
        <shortName evidence="1">TRPO</shortName>
    </alternativeName>
    <alternativeName>
        <fullName evidence="1">Tryptophan pyrrolase</fullName>
    </alternativeName>
    <alternativeName>
        <fullName evidence="1">Tryptophanase</fullName>
    </alternativeName>
</protein>
<feature type="chain" id="PRO_0000360103" description="Tryptophan 2,3-dioxygenase">
    <location>
        <begin position="1"/>
        <end position="306"/>
    </location>
</feature>
<feature type="region of interest" description="Disordered" evidence="2">
    <location>
        <begin position="1"/>
        <end position="29"/>
    </location>
</feature>
<feature type="binding site" evidence="1">
    <location>
        <begin position="75"/>
        <end position="79"/>
    </location>
    <ligand>
        <name>substrate</name>
    </ligand>
</feature>
<feature type="binding site" evidence="1">
    <location>
        <position position="137"/>
    </location>
    <ligand>
        <name>substrate</name>
    </ligand>
</feature>
<feature type="binding site" evidence="1">
    <location>
        <position position="141"/>
    </location>
    <ligand>
        <name>substrate</name>
    </ligand>
</feature>
<feature type="binding site" description="axial binding residue" evidence="1">
    <location>
        <position position="264"/>
    </location>
    <ligand>
        <name>heme</name>
        <dbReference type="ChEBI" id="CHEBI:30413"/>
    </ligand>
    <ligandPart>
        <name>Fe</name>
        <dbReference type="ChEBI" id="CHEBI:18248"/>
    </ligandPart>
</feature>
<feature type="binding site" evidence="1">
    <location>
        <position position="278"/>
    </location>
    <ligand>
        <name>substrate</name>
    </ligand>
</feature>
<sequence>MQPPGDDAAPRCPFAGAHAPDAPHVPEAAGDDVQAGWHRAQLDFSQSMSYGDYLSLDPILDAQHPRSPDHNEMLFIIQHQTSELWMKLALYELRAALASIRDDALPPAFKMLARVSRVLEQLVQAWNVLATMTPSEYSAMRPYLGASSGFQSYQYRELEFILGNKNAQMLRPHAHRPAIHAHLEASLQAPSLYDEVIRLLARRGFPIAPERLDADWTQPTRHDRTVETAWLAVYREPNAHWELYEMAEELVDLEDAFRQWRFRHVTTVERIIGFKQGTGSTSGAPYLRKMLDVVLFPELWHVRTTL</sequence>
<comment type="function">
    <text evidence="1">Heme-dependent dioxygenase that catalyzes the oxidative cleavage of the L-tryptophan (L-Trp) pyrrole ring and converts L-tryptophan to N-formyl-L-kynurenine. Catalyzes the oxidative cleavage of the indole moiety.</text>
</comment>
<comment type="catalytic activity">
    <reaction evidence="1">
        <text>L-tryptophan + O2 = N-formyl-L-kynurenine</text>
        <dbReference type="Rhea" id="RHEA:24536"/>
        <dbReference type="ChEBI" id="CHEBI:15379"/>
        <dbReference type="ChEBI" id="CHEBI:57912"/>
        <dbReference type="ChEBI" id="CHEBI:58629"/>
        <dbReference type="EC" id="1.13.11.11"/>
    </reaction>
</comment>
<comment type="cofactor">
    <cofactor evidence="1">
        <name>heme</name>
        <dbReference type="ChEBI" id="CHEBI:30413"/>
    </cofactor>
    <text evidence="1">Binds 1 heme group per subunit.</text>
</comment>
<comment type="pathway">
    <text evidence="1">Amino-acid degradation; L-tryptophan degradation via kynurenine pathway; L-kynurenine from L-tryptophan: step 1/2.</text>
</comment>
<comment type="subunit">
    <text evidence="1">Homotetramer.</text>
</comment>
<comment type="similarity">
    <text evidence="1">Belongs to the tryptophan 2,3-dioxygenase family.</text>
</comment>
<evidence type="ECO:0000255" key="1">
    <source>
        <dbReference type="HAMAP-Rule" id="MF_01972"/>
    </source>
</evidence>
<evidence type="ECO:0000256" key="2">
    <source>
        <dbReference type="SAM" id="MobiDB-lite"/>
    </source>
</evidence>
<dbReference type="EC" id="1.13.11.11" evidence="1"/>
<dbReference type="EMBL" id="CP000548">
    <property type="protein sequence ID" value="ABO06394.1"/>
    <property type="molecule type" value="Genomic_DNA"/>
</dbReference>
<dbReference type="RefSeq" id="WP_004189970.1">
    <property type="nucleotide sequence ID" value="NZ_CP007802.1"/>
</dbReference>
<dbReference type="SMR" id="A3MHE1"/>
<dbReference type="GeneID" id="92978121"/>
<dbReference type="KEGG" id="bmaz:BM44_2878"/>
<dbReference type="KEGG" id="bmn:BMA10247_0098"/>
<dbReference type="PATRIC" id="fig|320389.8.peg.3248"/>
<dbReference type="UniPathway" id="UPA00333">
    <property type="reaction ID" value="UER00453"/>
</dbReference>
<dbReference type="GO" id="GO:0020037">
    <property type="term" value="F:heme binding"/>
    <property type="evidence" value="ECO:0000250"/>
    <property type="project" value="UniProtKB"/>
</dbReference>
<dbReference type="GO" id="GO:0046872">
    <property type="term" value="F:metal ion binding"/>
    <property type="evidence" value="ECO:0007669"/>
    <property type="project" value="UniProtKB-KW"/>
</dbReference>
<dbReference type="GO" id="GO:0004833">
    <property type="term" value="F:tryptophan 2,3-dioxygenase activity"/>
    <property type="evidence" value="ECO:0000250"/>
    <property type="project" value="UniProtKB"/>
</dbReference>
<dbReference type="GO" id="GO:0019442">
    <property type="term" value="P:L-tryptophan catabolic process to acetyl-CoA"/>
    <property type="evidence" value="ECO:0007669"/>
    <property type="project" value="TreeGrafter"/>
</dbReference>
<dbReference type="GO" id="GO:0019441">
    <property type="term" value="P:L-tryptophan catabolic process to kynurenine"/>
    <property type="evidence" value="ECO:0000250"/>
    <property type="project" value="UniProtKB"/>
</dbReference>
<dbReference type="FunFam" id="1.20.58.480:FF:000001">
    <property type="entry name" value="Tryptophan 2,3-dioxygenase"/>
    <property type="match status" value="1"/>
</dbReference>
<dbReference type="Gene3D" id="1.20.58.480">
    <property type="match status" value="1"/>
</dbReference>
<dbReference type="HAMAP" id="MF_01972">
    <property type="entry name" value="T23O"/>
    <property type="match status" value="1"/>
</dbReference>
<dbReference type="InterPro" id="IPR037217">
    <property type="entry name" value="Trp/Indoleamine_2_3_dOase-like"/>
</dbReference>
<dbReference type="InterPro" id="IPR017485">
    <property type="entry name" value="Trp_2-3-dOase_bac"/>
</dbReference>
<dbReference type="InterPro" id="IPR004981">
    <property type="entry name" value="Trp_2_3_dOase"/>
</dbReference>
<dbReference type="NCBIfam" id="TIGR03036">
    <property type="entry name" value="trp_2_3_diox"/>
    <property type="match status" value="1"/>
</dbReference>
<dbReference type="PANTHER" id="PTHR10138">
    <property type="entry name" value="TRYPTOPHAN 2,3-DIOXYGENASE"/>
    <property type="match status" value="1"/>
</dbReference>
<dbReference type="PANTHER" id="PTHR10138:SF0">
    <property type="entry name" value="TRYPTOPHAN 2,3-DIOXYGENASE"/>
    <property type="match status" value="1"/>
</dbReference>
<dbReference type="Pfam" id="PF03301">
    <property type="entry name" value="Trp_dioxygenase"/>
    <property type="match status" value="1"/>
</dbReference>
<dbReference type="SUPFAM" id="SSF140959">
    <property type="entry name" value="Indolic compounds 2,3-dioxygenase-like"/>
    <property type="match status" value="1"/>
</dbReference>
<organism>
    <name type="scientific">Burkholderia mallei (strain NCTC 10247)</name>
    <dbReference type="NCBI Taxonomy" id="320389"/>
    <lineage>
        <taxon>Bacteria</taxon>
        <taxon>Pseudomonadati</taxon>
        <taxon>Pseudomonadota</taxon>
        <taxon>Betaproteobacteria</taxon>
        <taxon>Burkholderiales</taxon>
        <taxon>Burkholderiaceae</taxon>
        <taxon>Burkholderia</taxon>
        <taxon>pseudomallei group</taxon>
    </lineage>
</organism>
<name>T23O_BURM7</name>
<reference key="1">
    <citation type="journal article" date="2010" name="Genome Biol. Evol.">
        <title>Continuing evolution of Burkholderia mallei through genome reduction and large-scale rearrangements.</title>
        <authorList>
            <person name="Losada L."/>
            <person name="Ronning C.M."/>
            <person name="DeShazer D."/>
            <person name="Woods D."/>
            <person name="Fedorova N."/>
            <person name="Kim H.S."/>
            <person name="Shabalina S.A."/>
            <person name="Pearson T.R."/>
            <person name="Brinkac L."/>
            <person name="Tan P."/>
            <person name="Nandi T."/>
            <person name="Crabtree J."/>
            <person name="Badger J."/>
            <person name="Beckstrom-Sternberg S."/>
            <person name="Saqib M."/>
            <person name="Schutzer S.E."/>
            <person name="Keim P."/>
            <person name="Nierman W.C."/>
        </authorList>
    </citation>
    <scope>NUCLEOTIDE SEQUENCE [LARGE SCALE GENOMIC DNA]</scope>
    <source>
        <strain>NCTC 10247</strain>
    </source>
</reference>
<keyword id="KW-0223">Dioxygenase</keyword>
<keyword id="KW-0349">Heme</keyword>
<keyword id="KW-0408">Iron</keyword>
<keyword id="KW-0479">Metal-binding</keyword>
<keyword id="KW-0560">Oxidoreductase</keyword>
<keyword id="KW-0823">Tryptophan catabolism</keyword>
<gene>
    <name evidence="1" type="primary">kynA</name>
    <name type="ordered locus">BMA10247_0098</name>
</gene>
<accession>A3MHE1</accession>
<proteinExistence type="inferred from homology"/>